<reference key="1">
    <citation type="submission" date="2006-03" db="EMBL/GenBank/DDBJ databases">
        <title>Complete sequence of chromosome of Psychrobacter cryohalolentis K5.</title>
        <authorList>
            <consortium name="US DOE Joint Genome Institute"/>
            <person name="Copeland A."/>
            <person name="Lucas S."/>
            <person name="Lapidus A."/>
            <person name="Barry K."/>
            <person name="Detter J.C."/>
            <person name="Glavina T."/>
            <person name="Hammon N."/>
            <person name="Israni S."/>
            <person name="Dalin E."/>
            <person name="Tice H."/>
            <person name="Pitluck S."/>
            <person name="Brettin T."/>
            <person name="Bruce D."/>
            <person name="Han C."/>
            <person name="Tapia R."/>
            <person name="Sims D.R."/>
            <person name="Gilna P."/>
            <person name="Schmutz J."/>
            <person name="Larimer F."/>
            <person name="Land M."/>
            <person name="Hauser L."/>
            <person name="Kyrpides N."/>
            <person name="Kim E."/>
            <person name="Richardson P."/>
        </authorList>
    </citation>
    <scope>NUCLEOTIDE SEQUENCE [LARGE SCALE GENOMIC DNA]</scope>
    <source>
        <strain>ATCC BAA-1226 / DSM 17306 / VKM B-2378 / K5</strain>
    </source>
</reference>
<name>RL4_PSYCK</name>
<sequence>MDLKTVTGAAVELSDTAFGREFNEALVHQVVTAYLAGARQGTRAQKTRAEVSGGGIKPWRQKGTGRARAGSIRSPIWRGGGRAFAAKPQDWSQKVNRKMYRGAMQCILAELIRQERLILVEEISVSGPKTKELIAKLGELNASRALIVTKEVDENLYLAARNIPHVNVLDTSEVDPVSLIAFDKVIMTVEAAKQFEEALA</sequence>
<gene>
    <name evidence="1" type="primary">rplD</name>
    <name type="ordered locus">Pcryo_0485</name>
</gene>
<organism>
    <name type="scientific">Psychrobacter cryohalolentis (strain ATCC BAA-1226 / DSM 17306 / VKM B-2378 / K5)</name>
    <dbReference type="NCBI Taxonomy" id="335284"/>
    <lineage>
        <taxon>Bacteria</taxon>
        <taxon>Pseudomonadati</taxon>
        <taxon>Pseudomonadota</taxon>
        <taxon>Gammaproteobacteria</taxon>
        <taxon>Moraxellales</taxon>
        <taxon>Moraxellaceae</taxon>
        <taxon>Psychrobacter</taxon>
    </lineage>
</organism>
<accession>Q1QDI5</accession>
<proteinExistence type="inferred from homology"/>
<dbReference type="EMBL" id="CP000323">
    <property type="protein sequence ID" value="ABE74268.1"/>
    <property type="molecule type" value="Genomic_DNA"/>
</dbReference>
<dbReference type="RefSeq" id="WP_011512852.1">
    <property type="nucleotide sequence ID" value="NC_007969.1"/>
</dbReference>
<dbReference type="SMR" id="Q1QDI5"/>
<dbReference type="STRING" id="335284.Pcryo_0485"/>
<dbReference type="KEGG" id="pcr:Pcryo_0485"/>
<dbReference type="eggNOG" id="COG0088">
    <property type="taxonomic scope" value="Bacteria"/>
</dbReference>
<dbReference type="HOGENOM" id="CLU_041575_5_2_6"/>
<dbReference type="Proteomes" id="UP000002425">
    <property type="component" value="Chromosome"/>
</dbReference>
<dbReference type="GO" id="GO:1990904">
    <property type="term" value="C:ribonucleoprotein complex"/>
    <property type="evidence" value="ECO:0007669"/>
    <property type="project" value="UniProtKB-KW"/>
</dbReference>
<dbReference type="GO" id="GO:0005840">
    <property type="term" value="C:ribosome"/>
    <property type="evidence" value="ECO:0007669"/>
    <property type="project" value="UniProtKB-KW"/>
</dbReference>
<dbReference type="GO" id="GO:0019843">
    <property type="term" value="F:rRNA binding"/>
    <property type="evidence" value="ECO:0007669"/>
    <property type="project" value="UniProtKB-UniRule"/>
</dbReference>
<dbReference type="GO" id="GO:0003735">
    <property type="term" value="F:structural constituent of ribosome"/>
    <property type="evidence" value="ECO:0007669"/>
    <property type="project" value="InterPro"/>
</dbReference>
<dbReference type="GO" id="GO:0006412">
    <property type="term" value="P:translation"/>
    <property type="evidence" value="ECO:0007669"/>
    <property type="project" value="UniProtKB-UniRule"/>
</dbReference>
<dbReference type="FunFam" id="3.40.1370.10:FF:000001">
    <property type="entry name" value="50S ribosomal protein L4"/>
    <property type="match status" value="1"/>
</dbReference>
<dbReference type="Gene3D" id="3.40.1370.10">
    <property type="match status" value="1"/>
</dbReference>
<dbReference type="HAMAP" id="MF_01328_B">
    <property type="entry name" value="Ribosomal_uL4_B"/>
    <property type="match status" value="1"/>
</dbReference>
<dbReference type="InterPro" id="IPR002136">
    <property type="entry name" value="Ribosomal_uL4"/>
</dbReference>
<dbReference type="InterPro" id="IPR013005">
    <property type="entry name" value="Ribosomal_uL4-like"/>
</dbReference>
<dbReference type="InterPro" id="IPR023574">
    <property type="entry name" value="Ribosomal_uL4_dom_sf"/>
</dbReference>
<dbReference type="NCBIfam" id="TIGR03953">
    <property type="entry name" value="rplD_bact"/>
    <property type="match status" value="1"/>
</dbReference>
<dbReference type="PANTHER" id="PTHR10746">
    <property type="entry name" value="50S RIBOSOMAL PROTEIN L4"/>
    <property type="match status" value="1"/>
</dbReference>
<dbReference type="PANTHER" id="PTHR10746:SF6">
    <property type="entry name" value="LARGE RIBOSOMAL SUBUNIT PROTEIN UL4M"/>
    <property type="match status" value="1"/>
</dbReference>
<dbReference type="Pfam" id="PF00573">
    <property type="entry name" value="Ribosomal_L4"/>
    <property type="match status" value="1"/>
</dbReference>
<dbReference type="SUPFAM" id="SSF52166">
    <property type="entry name" value="Ribosomal protein L4"/>
    <property type="match status" value="1"/>
</dbReference>
<comment type="function">
    <text evidence="1">One of the primary rRNA binding proteins, this protein initially binds near the 5'-end of the 23S rRNA. It is important during the early stages of 50S assembly. It makes multiple contacts with different domains of the 23S rRNA in the assembled 50S subunit and ribosome.</text>
</comment>
<comment type="function">
    <text evidence="1">Forms part of the polypeptide exit tunnel.</text>
</comment>
<comment type="subunit">
    <text evidence="1">Part of the 50S ribosomal subunit.</text>
</comment>
<comment type="similarity">
    <text evidence="1">Belongs to the universal ribosomal protein uL4 family.</text>
</comment>
<keyword id="KW-0687">Ribonucleoprotein</keyword>
<keyword id="KW-0689">Ribosomal protein</keyword>
<keyword id="KW-0694">RNA-binding</keyword>
<keyword id="KW-0699">rRNA-binding</keyword>
<protein>
    <recommendedName>
        <fullName evidence="1">Large ribosomal subunit protein uL4</fullName>
    </recommendedName>
    <alternativeName>
        <fullName evidence="3">50S ribosomal protein L4</fullName>
    </alternativeName>
</protein>
<feature type="chain" id="PRO_0000242421" description="Large ribosomal subunit protein uL4">
    <location>
        <begin position="1"/>
        <end position="200"/>
    </location>
</feature>
<feature type="region of interest" description="Disordered" evidence="2">
    <location>
        <begin position="45"/>
        <end position="64"/>
    </location>
</feature>
<evidence type="ECO:0000255" key="1">
    <source>
        <dbReference type="HAMAP-Rule" id="MF_01328"/>
    </source>
</evidence>
<evidence type="ECO:0000256" key="2">
    <source>
        <dbReference type="SAM" id="MobiDB-lite"/>
    </source>
</evidence>
<evidence type="ECO:0000305" key="3"/>